<accession>Q875B8</accession>
<dbReference type="EMBL" id="BX088700">
    <property type="protein sequence ID" value="CAD60693.1"/>
    <property type="molecule type" value="Genomic_DNA"/>
</dbReference>
<dbReference type="SMR" id="Q875B8"/>
<dbReference type="VEuPathDB" id="FungiDB:PODANS_5_5390"/>
<dbReference type="GO" id="GO:0000786">
    <property type="term" value="C:nucleosome"/>
    <property type="evidence" value="ECO:0007669"/>
    <property type="project" value="UniProtKB-KW"/>
</dbReference>
<dbReference type="GO" id="GO:0005634">
    <property type="term" value="C:nucleus"/>
    <property type="evidence" value="ECO:0007669"/>
    <property type="project" value="UniProtKB-SubCell"/>
</dbReference>
<dbReference type="GO" id="GO:0003677">
    <property type="term" value="F:DNA binding"/>
    <property type="evidence" value="ECO:0007669"/>
    <property type="project" value="UniProtKB-KW"/>
</dbReference>
<dbReference type="GO" id="GO:0046982">
    <property type="term" value="F:protein heterodimerization activity"/>
    <property type="evidence" value="ECO:0007669"/>
    <property type="project" value="InterPro"/>
</dbReference>
<dbReference type="GO" id="GO:0030527">
    <property type="term" value="F:structural constituent of chromatin"/>
    <property type="evidence" value="ECO:0007669"/>
    <property type="project" value="InterPro"/>
</dbReference>
<dbReference type="GO" id="GO:0006281">
    <property type="term" value="P:DNA repair"/>
    <property type="evidence" value="ECO:0007669"/>
    <property type="project" value="UniProtKB-KW"/>
</dbReference>
<dbReference type="CDD" id="cd00074">
    <property type="entry name" value="HFD_H2A"/>
    <property type="match status" value="1"/>
</dbReference>
<dbReference type="FunFam" id="1.10.20.10:FF:000008">
    <property type="entry name" value="Histone H2A"/>
    <property type="match status" value="1"/>
</dbReference>
<dbReference type="Gene3D" id="1.10.20.10">
    <property type="entry name" value="Histone, subunit A"/>
    <property type="match status" value="1"/>
</dbReference>
<dbReference type="InterPro" id="IPR009072">
    <property type="entry name" value="Histone-fold"/>
</dbReference>
<dbReference type="InterPro" id="IPR002119">
    <property type="entry name" value="Histone_H2A"/>
</dbReference>
<dbReference type="InterPro" id="IPR007125">
    <property type="entry name" value="Histone_H2A/H2B/H3"/>
</dbReference>
<dbReference type="InterPro" id="IPR032454">
    <property type="entry name" value="Histone_H2A_C"/>
</dbReference>
<dbReference type="InterPro" id="IPR032458">
    <property type="entry name" value="Histone_H2A_CS"/>
</dbReference>
<dbReference type="PANTHER" id="PTHR23430">
    <property type="entry name" value="HISTONE H2A"/>
    <property type="match status" value="1"/>
</dbReference>
<dbReference type="Pfam" id="PF00125">
    <property type="entry name" value="Histone"/>
    <property type="match status" value="1"/>
</dbReference>
<dbReference type="Pfam" id="PF16211">
    <property type="entry name" value="Histone_H2A_C"/>
    <property type="match status" value="1"/>
</dbReference>
<dbReference type="PRINTS" id="PR00620">
    <property type="entry name" value="HISTONEH2A"/>
</dbReference>
<dbReference type="SMART" id="SM00414">
    <property type="entry name" value="H2A"/>
    <property type="match status" value="1"/>
</dbReference>
<dbReference type="SUPFAM" id="SSF47113">
    <property type="entry name" value="Histone-fold"/>
    <property type="match status" value="1"/>
</dbReference>
<dbReference type="PROSITE" id="PS00046">
    <property type="entry name" value="HISTONE_H2A"/>
    <property type="match status" value="1"/>
</dbReference>
<name>H2A_PODAS</name>
<proteinExistence type="inferred from homology"/>
<sequence length="135" mass="14251">MTGGGKSGGKASSGKNAQSRSSKAGLAFPVGRVHRLLRKGNYAQRVGAGAPVYLAAVLEYLAAEILELAGNAARDNKKTRIIPRHLQLAIRNDEELNKLLGHVTIAQGGVLPNIHQNLLPKKTGTKPGKNASQEL</sequence>
<reference key="1">
    <citation type="journal article" date="2003" name="Fungal Genet. Biol.">
        <title>Characterization of the genomic organization of the region bordering the centromere of chromosome V of Podospora anserina by direct sequencing.</title>
        <authorList>
            <person name="Silar P."/>
            <person name="Barreau C."/>
            <person name="Debuchy R."/>
            <person name="Kicka S."/>
            <person name="Turcq B."/>
            <person name="Sainsard-Chanet A."/>
            <person name="Sellem C.H."/>
            <person name="Billault A."/>
            <person name="Cattolico L."/>
            <person name="Duprat S."/>
            <person name="Weissenbach J."/>
        </authorList>
    </citation>
    <scope>NUCLEOTIDE SEQUENCE [LARGE SCALE GENOMIC DNA]</scope>
    <source>
        <strain>s</strain>
    </source>
</reference>
<keyword id="KW-0007">Acetylation</keyword>
<keyword id="KW-0158">Chromosome</keyword>
<keyword id="KW-0227">DNA damage</keyword>
<keyword id="KW-0234">DNA repair</keyword>
<keyword id="KW-0238">DNA-binding</keyword>
<keyword id="KW-0488">Methylation</keyword>
<keyword id="KW-0544">Nucleosome core</keyword>
<keyword id="KW-0539">Nucleus</keyword>
<keyword id="KW-0597">Phosphoprotein</keyword>
<organism>
    <name type="scientific">Podospora anserina</name>
    <name type="common">Pleurage anserina</name>
    <dbReference type="NCBI Taxonomy" id="2587412"/>
    <lineage>
        <taxon>Eukaryota</taxon>
        <taxon>Fungi</taxon>
        <taxon>Dikarya</taxon>
        <taxon>Ascomycota</taxon>
        <taxon>Pezizomycotina</taxon>
        <taxon>Sordariomycetes</taxon>
        <taxon>Sordariomycetidae</taxon>
        <taxon>Sordariales</taxon>
        <taxon>Podosporaceae</taxon>
        <taxon>Podospora</taxon>
    </lineage>
</organism>
<feature type="initiator methionine" description="Removed" evidence="1">
    <location>
        <position position="1"/>
    </location>
</feature>
<feature type="chain" id="PRO_0000228733" description="Histone H2A">
    <location>
        <begin position="2"/>
        <end position="135"/>
    </location>
</feature>
<feature type="region of interest" description="Disordered" evidence="2">
    <location>
        <begin position="1"/>
        <end position="24"/>
    </location>
</feature>
<feature type="short sequence motif" description="[ST]-Q motif">
    <location>
        <begin position="132"/>
        <end position="133"/>
    </location>
</feature>
<feature type="site" description="Not ubiquitinated" evidence="3">
    <location>
        <position position="121"/>
    </location>
</feature>
<feature type="modified residue" description="N6-acetyllysine" evidence="1">
    <location>
        <position position="6"/>
    </location>
</feature>
<feature type="modified residue" description="N6-acetyllysine" evidence="1">
    <location>
        <position position="10"/>
    </location>
</feature>
<feature type="modified residue" description="N5-methylglutamine" evidence="1">
    <location>
        <position position="107"/>
    </location>
</feature>
<feature type="modified residue" description="Phosphoserine" evidence="1">
    <location>
        <position position="132"/>
    </location>
</feature>
<gene>
    <name type="primary">HTA1</name>
    <name type="ORF">Pa5D0006</name>
</gene>
<comment type="function">
    <text>Core component of nucleosome which plays a central role in DNA double strand break (DSB) repair. Nucleosomes wrap and compact DNA into chromatin, limiting DNA accessibility to the cellular machineries which require DNA as a template. Histones thereby play a central role in transcription regulation, DNA repair, DNA replication and chromosomal stability. DNA accessibility is regulated via a complex set of post-translational modifications of histones, also called histone code, and nucleosome remodeling.</text>
</comment>
<comment type="subunit">
    <text>The nucleosome is a histone octamer containing two molecules each of H2A, H2B, H3 and H4 assembled in one H3-H4 heterotetramer and two H2A-H2B heterodimers. The octamer wraps approximately 147 bp of DNA.</text>
</comment>
<comment type="subcellular location">
    <subcellularLocation>
        <location evidence="1">Nucleus</location>
    </subcellularLocation>
    <subcellularLocation>
        <location evidence="1">Chromosome</location>
    </subcellularLocation>
</comment>
<comment type="domain">
    <text>The [ST]-Q motif constitutes a recognition sequence for kinases from the PI3/PI4-kinase family.</text>
</comment>
<comment type="PTM">
    <text evidence="1">Phosphorylated to form H2AS128ph (gamma-H2A) in response to DNA double-strand breaks (DSBs) generated by exogenous genotoxic agents and by stalled replication forks. Phosphorylation is dependent on the DNA damage checkpoint kinases MEC1/ATR and TEL1/ATM, spreads on either side of a detected DSB site and may mark the surrounding chromatin for recruitment of proteins required for DNA damage signaling and repair. Gamma-H2A is removed from the DNA prior to the strand invasion-primer extension step of the repair process and subsequently dephosphorylated. Dephosphorylation is necessary for efficient recovery from the DNA damage checkpoint (By similarity).</text>
</comment>
<comment type="PTM">
    <text evidence="1">Acetylated by ESA1 to form H2AK4ac and H2AK7ac.</text>
</comment>
<comment type="miscellaneous">
    <text evidence="3">In contrast to vertebrates and insects, its C-terminus is not monoubiquitinated.</text>
</comment>
<comment type="similarity">
    <text evidence="3">Belongs to the histone H2A family.</text>
</comment>
<comment type="caution">
    <text evidence="3">To ensure consistency between histone entries, we follow the 'Brno' nomenclature for histone modifications, with positions referring to those used in the literature for the 'closest' model organism. Due to slight variations in histone sequences between organisms and to the presence of initiator methionine in UniProtKB/Swiss-Prot sequences, the actual positions of modified amino acids in the sequence generally differ. In this entry the following conventions are used: H2AK4ac = acetylated Lys-6; H2AK7ac = acetylated Lys-10; H2AS128ph = phosphorylated Ser-132.</text>
</comment>
<protein>
    <recommendedName>
        <fullName>Histone H2A</fullName>
    </recommendedName>
</protein>
<evidence type="ECO:0000250" key="1"/>
<evidence type="ECO:0000256" key="2">
    <source>
        <dbReference type="SAM" id="MobiDB-lite"/>
    </source>
</evidence>
<evidence type="ECO:0000305" key="3"/>